<feature type="chain" id="PRO_0000433009" description="Serine/threonine-protein kinase nekl-3">
    <location>
        <begin position="1"/>
        <end position="302"/>
    </location>
</feature>
<feature type="domain" description="Protein kinase" evidence="2">
    <location>
        <begin position="23"/>
        <end position="288"/>
    </location>
</feature>
<feature type="active site" description="Proton acceptor" evidence="2">
    <location>
        <position position="150"/>
    </location>
</feature>
<feature type="binding site" evidence="2">
    <location>
        <begin position="29"/>
        <end position="37"/>
    </location>
    <ligand>
        <name>ATP</name>
        <dbReference type="ChEBI" id="CHEBI:30616"/>
    </ligand>
</feature>
<feature type="binding site" evidence="2">
    <location>
        <position position="52"/>
    </location>
    <ligand>
        <name>ATP</name>
        <dbReference type="ChEBI" id="CHEBI:30616"/>
    </ligand>
</feature>
<feature type="mutagenesis site" description="Failure to shed the cuticle in the middle part of the body at the end of the first molt." evidence="3">
    <original>P</original>
    <variation>L</variation>
    <location>
        <position position="194"/>
    </location>
</feature>
<reference evidence="4" key="1">
    <citation type="journal article" date="2015" name="Dev. Biol.">
        <title>C. elegans NIMA-related kinases NEKL-2 and NEKL-3 are required for the completion of molting.</title>
        <authorList>
            <person name="Yochem J."/>
            <person name="Lazetic V."/>
            <person name="Bell L."/>
            <person name="Chen L."/>
            <person name="Fay D."/>
        </authorList>
    </citation>
    <scope>NUCLEOTIDE SEQUENCE [MRNA]</scope>
    <scope>FUNCTION</scope>
    <scope>SUBCELLULAR LOCATION</scope>
    <scope>TISSUE SPECIFICITY</scope>
    <scope>DEVELOPMENTAL STAGE</scope>
    <scope>DISRUPTION PHENOTYPE</scope>
    <scope>MUTAGENESIS OF PRO-194</scope>
</reference>
<reference evidence="7" key="2">
    <citation type="journal article" date="1998" name="Science">
        <title>Genome sequence of the nematode C. elegans: a platform for investigating biology.</title>
        <authorList>
            <consortium name="The C. elegans sequencing consortium"/>
        </authorList>
    </citation>
    <scope>NUCLEOTIDE SEQUENCE [LARGE SCALE GENOMIC DNA]</scope>
    <source>
        <strain evidence="7">Bristol N2</strain>
    </source>
</reference>
<comment type="function">
    <text evidence="3">Probable serine/threonine-protein kinase required for the completion of molting.</text>
</comment>
<comment type="catalytic activity">
    <reaction evidence="1">
        <text>L-seryl-[protein] + ATP = O-phospho-L-seryl-[protein] + ADP + H(+)</text>
        <dbReference type="Rhea" id="RHEA:17989"/>
        <dbReference type="Rhea" id="RHEA-COMP:9863"/>
        <dbReference type="Rhea" id="RHEA-COMP:11604"/>
        <dbReference type="ChEBI" id="CHEBI:15378"/>
        <dbReference type="ChEBI" id="CHEBI:29999"/>
        <dbReference type="ChEBI" id="CHEBI:30616"/>
        <dbReference type="ChEBI" id="CHEBI:83421"/>
        <dbReference type="ChEBI" id="CHEBI:456216"/>
        <dbReference type="EC" id="2.7.11.34"/>
    </reaction>
</comment>
<comment type="catalytic activity">
    <reaction evidence="1">
        <text>L-threonyl-[protein] + ATP = O-phospho-L-threonyl-[protein] + ADP + H(+)</text>
        <dbReference type="Rhea" id="RHEA:46608"/>
        <dbReference type="Rhea" id="RHEA-COMP:11060"/>
        <dbReference type="Rhea" id="RHEA-COMP:11605"/>
        <dbReference type="ChEBI" id="CHEBI:15378"/>
        <dbReference type="ChEBI" id="CHEBI:30013"/>
        <dbReference type="ChEBI" id="CHEBI:30616"/>
        <dbReference type="ChEBI" id="CHEBI:61977"/>
        <dbReference type="ChEBI" id="CHEBI:456216"/>
        <dbReference type="EC" id="2.7.11.34"/>
    </reaction>
</comment>
<comment type="cofactor">
    <cofactor evidence="1">
        <name>Mg(2+)</name>
        <dbReference type="ChEBI" id="CHEBI:18420"/>
    </cofactor>
</comment>
<comment type="subcellular location">
    <subcellularLocation>
        <location evidence="3">Cytoplasm</location>
    </subcellularLocation>
    <text evidence="3">In hyp7 syncytium, localizes in puncta and small tubules near the plasma membrane apical region. Does not co-localize with nekl-2.</text>
</comment>
<comment type="tissue specificity">
    <text evidence="3">Expressed in hypodermal cells including in hyp7 syncytium but not in seam cells. May be expressed in vulva, uterus and some neurons.</text>
</comment>
<comment type="developmental stage">
    <text evidence="3">Expressed in the hypodermis at the beginning of embryonic morphogenesis and throughout larval and adult stages.</text>
</comment>
<comment type="disruption phenotype">
    <text evidence="3">RNAi-mediated knockdown results in a failure to shed the cuticle in the middle part of the body at the end of the first molt.</text>
</comment>
<comment type="similarity">
    <text evidence="4">Belongs to the protein kinase superfamily. NEK Ser/Thr protein kinase family. NIMA subfamily.</text>
</comment>
<accession>G5EFM9</accession>
<proteinExistence type="evidence at protein level"/>
<sequence length="302" mass="34578">MDKISNIYNFDDPPPDKLSLELFIIEKKIGKGQFSEVFRAQCTWVDLHVALKKIQVFEMVDQKARQDCLKEIDLLKQLNHVNVIRYYASFIDNNQLNIVLELAEAGDMSRMIKHFKKGGRLIPEKTIWKYFVQLARALAHMHSKRIMHRDIKPANVFITGNGIVKLGDLGLGRFFSSKTTAAHSLVGTPYYMSPERIQESGYNFKSDLWSTGCLLYEMAALQSPFYGDKMNLYSLCKKIENCEYPPLPADIYSTQLRDLVSRCILPEASKRPETSEVLQVAEHMNNYFSPSGDQSTTPSTQF</sequence>
<gene>
    <name evidence="8" type="primary">nekl-3</name>
    <name evidence="8" type="synonym">mlt-1</name>
    <name evidence="8" type="ORF">F19H6.1</name>
</gene>
<organism evidence="7">
    <name type="scientific">Caenorhabditis elegans</name>
    <dbReference type="NCBI Taxonomy" id="6239"/>
    <lineage>
        <taxon>Eukaryota</taxon>
        <taxon>Metazoa</taxon>
        <taxon>Ecdysozoa</taxon>
        <taxon>Nematoda</taxon>
        <taxon>Chromadorea</taxon>
        <taxon>Rhabditida</taxon>
        <taxon>Rhabditina</taxon>
        <taxon>Rhabditomorpha</taxon>
        <taxon>Rhabditoidea</taxon>
        <taxon>Rhabditidae</taxon>
        <taxon>Peloderinae</taxon>
        <taxon>Caenorhabditis</taxon>
    </lineage>
</organism>
<keyword id="KW-0067">ATP-binding</keyword>
<keyword id="KW-0963">Cytoplasm</keyword>
<keyword id="KW-0217">Developmental protein</keyword>
<keyword id="KW-0418">Kinase</keyword>
<keyword id="KW-0460">Magnesium</keyword>
<keyword id="KW-0479">Metal-binding</keyword>
<keyword id="KW-0547">Nucleotide-binding</keyword>
<keyword id="KW-1185">Reference proteome</keyword>
<keyword id="KW-0723">Serine/threonine-protein kinase</keyword>
<keyword id="KW-0808">Transferase</keyword>
<protein>
    <recommendedName>
        <fullName evidence="4">Serine/threonine-protein kinase nekl-3</fullName>
        <ecNumber evidence="1">2.7.11.34</ecNumber>
    </recommendedName>
    <alternativeName>
        <fullName evidence="6">Molting protein MLT-1</fullName>
    </alternativeName>
    <alternativeName>
        <fullName evidence="5">Never in mitosis A kinase-like 3</fullName>
        <shortName evidence="4">NimA kinase-like 3</shortName>
    </alternativeName>
</protein>
<dbReference type="EC" id="2.7.11.34" evidence="1"/>
<dbReference type="EMBL" id="DQ645955">
    <property type="protein sequence ID" value="ABG36763.1"/>
    <property type="molecule type" value="mRNA"/>
</dbReference>
<dbReference type="EMBL" id="Z68115">
    <property type="protein sequence ID" value="CAA92169.2"/>
    <property type="molecule type" value="Genomic_DNA"/>
</dbReference>
<dbReference type="EMBL" id="Z50873">
    <property type="protein sequence ID" value="CAA92169.2"/>
    <property type="status" value="JOINED"/>
    <property type="molecule type" value="Genomic_DNA"/>
</dbReference>
<dbReference type="PIR" id="T21075">
    <property type="entry name" value="T21075"/>
</dbReference>
<dbReference type="RefSeq" id="NP_510080.2">
    <property type="nucleotide sequence ID" value="NM_077679.5"/>
</dbReference>
<dbReference type="SMR" id="G5EFM9"/>
<dbReference type="FunCoup" id="G5EFM9">
    <property type="interactions" value="423"/>
</dbReference>
<dbReference type="STRING" id="6239.F19H6.1.2"/>
<dbReference type="PaxDb" id="6239-F19H6.1.2"/>
<dbReference type="PeptideAtlas" id="G5EFM9"/>
<dbReference type="EnsemblMetazoa" id="F19H6.1.1">
    <property type="protein sequence ID" value="F19H6.1.1"/>
    <property type="gene ID" value="WBGene00008956"/>
</dbReference>
<dbReference type="EnsemblMetazoa" id="F19H6.1.2">
    <property type="protein sequence ID" value="F19H6.1.2"/>
    <property type="gene ID" value="WBGene00008956"/>
</dbReference>
<dbReference type="GeneID" id="181398"/>
<dbReference type="KEGG" id="cel:CELE_F19H6.1"/>
<dbReference type="AGR" id="WB:WBGene00008956"/>
<dbReference type="CTD" id="181398"/>
<dbReference type="WormBase" id="F19H6.1">
    <property type="protein sequence ID" value="CE31484"/>
    <property type="gene ID" value="WBGene00008956"/>
    <property type="gene designation" value="nekl-3"/>
</dbReference>
<dbReference type="eggNOG" id="KOG0591">
    <property type="taxonomic scope" value="Eukaryota"/>
</dbReference>
<dbReference type="GeneTree" id="ENSGT00940000156725"/>
<dbReference type="HOGENOM" id="CLU_000288_63_23_1"/>
<dbReference type="InParanoid" id="G5EFM9"/>
<dbReference type="OMA" id="SEQMNAH"/>
<dbReference type="OrthoDB" id="248923at2759"/>
<dbReference type="PhylomeDB" id="G5EFM9"/>
<dbReference type="Reactome" id="R-CEL-2980767">
    <property type="pathway name" value="Activation of NIMA Kinases NEK9, NEK6, NEK7"/>
</dbReference>
<dbReference type="Reactome" id="R-CEL-9648025">
    <property type="pathway name" value="EML4 and NUDC in mitotic spindle formation"/>
</dbReference>
<dbReference type="PRO" id="PR:G5EFM9"/>
<dbReference type="Proteomes" id="UP000001940">
    <property type="component" value="Chromosome X"/>
</dbReference>
<dbReference type="Bgee" id="WBGene00008956">
    <property type="expression patterns" value="Expressed in larva and 4 other cell types or tissues"/>
</dbReference>
<dbReference type="GO" id="GO:0016324">
    <property type="term" value="C:apical plasma membrane"/>
    <property type="evidence" value="ECO:0000314"/>
    <property type="project" value="UniProtKB"/>
</dbReference>
<dbReference type="GO" id="GO:0005737">
    <property type="term" value="C:cytoplasm"/>
    <property type="evidence" value="ECO:0007669"/>
    <property type="project" value="UniProtKB-SubCell"/>
</dbReference>
<dbReference type="GO" id="GO:0005524">
    <property type="term" value="F:ATP binding"/>
    <property type="evidence" value="ECO:0007669"/>
    <property type="project" value="UniProtKB-KW"/>
</dbReference>
<dbReference type="GO" id="GO:0046872">
    <property type="term" value="F:metal ion binding"/>
    <property type="evidence" value="ECO:0007669"/>
    <property type="project" value="UniProtKB-KW"/>
</dbReference>
<dbReference type="GO" id="GO:0106310">
    <property type="term" value="F:protein serine kinase activity"/>
    <property type="evidence" value="ECO:0007669"/>
    <property type="project" value="RHEA"/>
</dbReference>
<dbReference type="GO" id="GO:0004674">
    <property type="term" value="F:protein serine/threonine kinase activity"/>
    <property type="evidence" value="ECO:0000318"/>
    <property type="project" value="GO_Central"/>
</dbReference>
<dbReference type="GO" id="GO:0008406">
    <property type="term" value="P:gonad development"/>
    <property type="evidence" value="ECO:0000316"/>
    <property type="project" value="UniProtKB"/>
</dbReference>
<dbReference type="GO" id="GO:0042303">
    <property type="term" value="P:molting cycle"/>
    <property type="evidence" value="ECO:0000315"/>
    <property type="project" value="UniProtKB"/>
</dbReference>
<dbReference type="GO" id="GO:0035264">
    <property type="term" value="P:multicellular organism growth"/>
    <property type="evidence" value="ECO:0000316"/>
    <property type="project" value="UniProtKB"/>
</dbReference>
<dbReference type="CDD" id="cd08224">
    <property type="entry name" value="STKc_Nek6_7"/>
    <property type="match status" value="1"/>
</dbReference>
<dbReference type="FunFam" id="1.10.510.10:FF:000148">
    <property type="entry name" value="Serine/threonine-protein kinase Nek7"/>
    <property type="match status" value="1"/>
</dbReference>
<dbReference type="FunFam" id="3.30.200.20:FF:000204">
    <property type="entry name" value="Serine/threonine-protein kinase Nek7"/>
    <property type="match status" value="1"/>
</dbReference>
<dbReference type="FunFam" id="3.30.200.20:FF:000240">
    <property type="entry name" value="Serine/threonine-protein kinase Nek7"/>
    <property type="match status" value="1"/>
</dbReference>
<dbReference type="Gene3D" id="3.30.200.20">
    <property type="entry name" value="Phosphorylase Kinase, domain 1"/>
    <property type="match status" value="1"/>
</dbReference>
<dbReference type="Gene3D" id="1.10.510.10">
    <property type="entry name" value="Transferase(Phosphotransferase) domain 1"/>
    <property type="match status" value="1"/>
</dbReference>
<dbReference type="InterPro" id="IPR011009">
    <property type="entry name" value="Kinase-like_dom_sf"/>
</dbReference>
<dbReference type="InterPro" id="IPR000719">
    <property type="entry name" value="Prot_kinase_dom"/>
</dbReference>
<dbReference type="InterPro" id="IPR017441">
    <property type="entry name" value="Protein_kinase_ATP_BS"/>
</dbReference>
<dbReference type="InterPro" id="IPR008271">
    <property type="entry name" value="Ser/Thr_kinase_AS"/>
</dbReference>
<dbReference type="PANTHER" id="PTHR43289">
    <property type="entry name" value="MITOGEN-ACTIVATED PROTEIN KINASE KINASE KINASE 20-RELATED"/>
    <property type="match status" value="1"/>
</dbReference>
<dbReference type="PANTHER" id="PTHR43289:SF6">
    <property type="entry name" value="SERINE_THREONINE-PROTEIN KINASE NEKL-3"/>
    <property type="match status" value="1"/>
</dbReference>
<dbReference type="Pfam" id="PF00069">
    <property type="entry name" value="Pkinase"/>
    <property type="match status" value="1"/>
</dbReference>
<dbReference type="PIRSF" id="PIRSF000654">
    <property type="entry name" value="Integrin-linked_kinase"/>
    <property type="match status" value="1"/>
</dbReference>
<dbReference type="SMART" id="SM00220">
    <property type="entry name" value="S_TKc"/>
    <property type="match status" value="1"/>
</dbReference>
<dbReference type="SUPFAM" id="SSF56112">
    <property type="entry name" value="Protein kinase-like (PK-like)"/>
    <property type="match status" value="1"/>
</dbReference>
<dbReference type="PROSITE" id="PS00107">
    <property type="entry name" value="PROTEIN_KINASE_ATP"/>
    <property type="match status" value="1"/>
</dbReference>
<dbReference type="PROSITE" id="PS50011">
    <property type="entry name" value="PROTEIN_KINASE_DOM"/>
    <property type="match status" value="1"/>
</dbReference>
<dbReference type="PROSITE" id="PS00108">
    <property type="entry name" value="PROTEIN_KINASE_ST"/>
    <property type="match status" value="1"/>
</dbReference>
<name>NEKL3_CAEEL</name>
<evidence type="ECO:0000250" key="1">
    <source>
        <dbReference type="UniProtKB" id="Q9HC98"/>
    </source>
</evidence>
<evidence type="ECO:0000255" key="2">
    <source>
        <dbReference type="PROSITE-ProRule" id="PRU00159"/>
    </source>
</evidence>
<evidence type="ECO:0000269" key="3">
    <source>
    </source>
</evidence>
<evidence type="ECO:0000305" key="4"/>
<evidence type="ECO:0000305" key="5">
    <source>
    </source>
</evidence>
<evidence type="ECO:0000312" key="6">
    <source>
        <dbReference type="EMBL" id="ABG36763.1"/>
    </source>
</evidence>
<evidence type="ECO:0000312" key="7">
    <source>
        <dbReference type="Proteomes" id="UP000001940"/>
    </source>
</evidence>
<evidence type="ECO:0000312" key="8">
    <source>
        <dbReference type="WormBase" id="F19H6.1"/>
    </source>
</evidence>